<keyword id="KW-0963">Cytoplasm</keyword>
<keyword id="KW-0251">Elongation factor</keyword>
<keyword id="KW-0648">Protein biosynthesis</keyword>
<keyword id="KW-1185">Reference proteome</keyword>
<protein>
    <recommendedName>
        <fullName>Elongation factor P</fullName>
        <shortName>EF-P</shortName>
    </recommendedName>
</protein>
<proteinExistence type="inferred from homology"/>
<name>EFP_MYCBO</name>
<gene>
    <name type="primary">efp</name>
    <name type="ordered locus">BQ2027_MB2563C</name>
</gene>
<feature type="chain" id="PRO_0000094281" description="Elongation factor P">
    <location>
        <begin position="1"/>
        <end position="187"/>
    </location>
</feature>
<accession>P64035</accession>
<accession>A0A1R3Y1H1</accession>
<accession>P95019</accession>
<accession>X2BLM5</accession>
<evidence type="ECO:0000250" key="1"/>
<evidence type="ECO:0000305" key="2"/>
<organism>
    <name type="scientific">Mycobacterium bovis (strain ATCC BAA-935 / AF2122/97)</name>
    <dbReference type="NCBI Taxonomy" id="233413"/>
    <lineage>
        <taxon>Bacteria</taxon>
        <taxon>Bacillati</taxon>
        <taxon>Actinomycetota</taxon>
        <taxon>Actinomycetes</taxon>
        <taxon>Mycobacteriales</taxon>
        <taxon>Mycobacteriaceae</taxon>
        <taxon>Mycobacterium</taxon>
        <taxon>Mycobacterium tuberculosis complex</taxon>
    </lineage>
</organism>
<comment type="function">
    <text evidence="1">Involved in peptide bond synthesis. Stimulates efficient translation and peptide-bond synthesis on native or reconstituted 70S ribosomes in vitro. Probably functions indirectly by altering the affinity of the ribosome for aminoacyl-tRNA, thus increasing their reactivity as acceptors for peptidyl transferase (By similarity).</text>
</comment>
<comment type="pathway">
    <text>Protein biosynthesis; polypeptide chain elongation.</text>
</comment>
<comment type="subcellular location">
    <subcellularLocation>
        <location evidence="1">Cytoplasm</location>
    </subcellularLocation>
</comment>
<comment type="similarity">
    <text evidence="2">Belongs to the elongation factor P family.</text>
</comment>
<sequence length="187" mass="20407">MATTADFKNGLVLVIDGQLWTITEFQHVKPGKGPAFVRTKLKNVLSGKVVDKTFNAGVKVDTATVDRRDTTYLYRDGSDFVFMDSQDYEQHPLPEALVGDAARFLLEGMPVQVAFHNGVPLYIELPVTVELEVTHTEPGLQGDRSSAGTKPATLQTGAQINVPLFINTGDKLKVDSRDGSYLGRVNA</sequence>
<dbReference type="EMBL" id="LT708304">
    <property type="protein sequence ID" value="SIU01180.1"/>
    <property type="molecule type" value="Genomic_DNA"/>
</dbReference>
<dbReference type="RefSeq" id="NP_856209.1">
    <property type="nucleotide sequence ID" value="NC_002945.3"/>
</dbReference>
<dbReference type="RefSeq" id="WP_003412989.1">
    <property type="nucleotide sequence ID" value="NC_002945.4"/>
</dbReference>
<dbReference type="SMR" id="P64035"/>
<dbReference type="GeneID" id="45426535"/>
<dbReference type="KEGG" id="mbo:BQ2027_MB2563C"/>
<dbReference type="PATRIC" id="fig|233413.5.peg.2820"/>
<dbReference type="UniPathway" id="UPA00345"/>
<dbReference type="Proteomes" id="UP000001419">
    <property type="component" value="Chromosome"/>
</dbReference>
<dbReference type="GO" id="GO:0005737">
    <property type="term" value="C:cytoplasm"/>
    <property type="evidence" value="ECO:0007669"/>
    <property type="project" value="UniProtKB-SubCell"/>
</dbReference>
<dbReference type="GO" id="GO:0003746">
    <property type="term" value="F:translation elongation factor activity"/>
    <property type="evidence" value="ECO:0007669"/>
    <property type="project" value="UniProtKB-UniRule"/>
</dbReference>
<dbReference type="GO" id="GO:0043043">
    <property type="term" value="P:peptide biosynthetic process"/>
    <property type="evidence" value="ECO:0007669"/>
    <property type="project" value="InterPro"/>
</dbReference>
<dbReference type="CDD" id="cd04470">
    <property type="entry name" value="S1_EF-P_repeat_1"/>
    <property type="match status" value="1"/>
</dbReference>
<dbReference type="CDD" id="cd05794">
    <property type="entry name" value="S1_EF-P_repeat_2"/>
    <property type="match status" value="1"/>
</dbReference>
<dbReference type="FunFam" id="2.30.30.30:FF:000003">
    <property type="entry name" value="Elongation factor P"/>
    <property type="match status" value="1"/>
</dbReference>
<dbReference type="FunFam" id="2.40.50.140:FF:000004">
    <property type="entry name" value="Elongation factor P"/>
    <property type="match status" value="1"/>
</dbReference>
<dbReference type="FunFam" id="2.40.50.140:FF:000009">
    <property type="entry name" value="Elongation factor P"/>
    <property type="match status" value="1"/>
</dbReference>
<dbReference type="Gene3D" id="2.30.30.30">
    <property type="match status" value="1"/>
</dbReference>
<dbReference type="Gene3D" id="2.40.50.140">
    <property type="entry name" value="Nucleic acid-binding proteins"/>
    <property type="match status" value="2"/>
</dbReference>
<dbReference type="HAMAP" id="MF_00141">
    <property type="entry name" value="EF_P"/>
    <property type="match status" value="1"/>
</dbReference>
<dbReference type="InterPro" id="IPR015365">
    <property type="entry name" value="Elong-fact-P_C"/>
</dbReference>
<dbReference type="InterPro" id="IPR012340">
    <property type="entry name" value="NA-bd_OB-fold"/>
</dbReference>
<dbReference type="InterPro" id="IPR014722">
    <property type="entry name" value="Rib_uL2_dom2"/>
</dbReference>
<dbReference type="InterPro" id="IPR020599">
    <property type="entry name" value="Transl_elong_fac_P/YeiP"/>
</dbReference>
<dbReference type="InterPro" id="IPR013185">
    <property type="entry name" value="Transl_elong_KOW-like"/>
</dbReference>
<dbReference type="InterPro" id="IPR001059">
    <property type="entry name" value="Transl_elong_P/YeiP_cen"/>
</dbReference>
<dbReference type="InterPro" id="IPR013852">
    <property type="entry name" value="Transl_elong_P/YeiP_CS"/>
</dbReference>
<dbReference type="InterPro" id="IPR011768">
    <property type="entry name" value="Transl_elongation_fac_P"/>
</dbReference>
<dbReference type="InterPro" id="IPR008991">
    <property type="entry name" value="Translation_prot_SH3-like_sf"/>
</dbReference>
<dbReference type="NCBIfam" id="TIGR00038">
    <property type="entry name" value="efp"/>
    <property type="match status" value="1"/>
</dbReference>
<dbReference type="NCBIfam" id="NF001810">
    <property type="entry name" value="PRK00529.1"/>
    <property type="match status" value="1"/>
</dbReference>
<dbReference type="PANTHER" id="PTHR30053">
    <property type="entry name" value="ELONGATION FACTOR P"/>
    <property type="match status" value="1"/>
</dbReference>
<dbReference type="PANTHER" id="PTHR30053:SF12">
    <property type="entry name" value="ELONGATION FACTOR P (EF-P) FAMILY PROTEIN"/>
    <property type="match status" value="1"/>
</dbReference>
<dbReference type="Pfam" id="PF01132">
    <property type="entry name" value="EFP"/>
    <property type="match status" value="1"/>
</dbReference>
<dbReference type="Pfam" id="PF08207">
    <property type="entry name" value="EFP_N"/>
    <property type="match status" value="1"/>
</dbReference>
<dbReference type="Pfam" id="PF09285">
    <property type="entry name" value="Elong-fact-P_C"/>
    <property type="match status" value="1"/>
</dbReference>
<dbReference type="PIRSF" id="PIRSF005901">
    <property type="entry name" value="EF-P"/>
    <property type="match status" value="1"/>
</dbReference>
<dbReference type="SMART" id="SM01185">
    <property type="entry name" value="EFP"/>
    <property type="match status" value="1"/>
</dbReference>
<dbReference type="SMART" id="SM00841">
    <property type="entry name" value="Elong-fact-P_C"/>
    <property type="match status" value="1"/>
</dbReference>
<dbReference type="SUPFAM" id="SSF50249">
    <property type="entry name" value="Nucleic acid-binding proteins"/>
    <property type="match status" value="2"/>
</dbReference>
<dbReference type="SUPFAM" id="SSF50104">
    <property type="entry name" value="Translation proteins SH3-like domain"/>
    <property type="match status" value="1"/>
</dbReference>
<dbReference type="PROSITE" id="PS01275">
    <property type="entry name" value="EFP"/>
    <property type="match status" value="1"/>
</dbReference>
<reference key="1">
    <citation type="journal article" date="2003" name="Proc. Natl. Acad. Sci. U.S.A.">
        <title>The complete genome sequence of Mycobacterium bovis.</title>
        <authorList>
            <person name="Garnier T."/>
            <person name="Eiglmeier K."/>
            <person name="Camus J.-C."/>
            <person name="Medina N."/>
            <person name="Mansoor H."/>
            <person name="Pryor M."/>
            <person name="Duthoy S."/>
            <person name="Grondin S."/>
            <person name="Lacroix C."/>
            <person name="Monsempe C."/>
            <person name="Simon S."/>
            <person name="Harris B."/>
            <person name="Atkin R."/>
            <person name="Doggett J."/>
            <person name="Mayes R."/>
            <person name="Keating L."/>
            <person name="Wheeler P.R."/>
            <person name="Parkhill J."/>
            <person name="Barrell B.G."/>
            <person name="Cole S.T."/>
            <person name="Gordon S.V."/>
            <person name="Hewinson R.G."/>
        </authorList>
    </citation>
    <scope>NUCLEOTIDE SEQUENCE [LARGE SCALE GENOMIC DNA]</scope>
    <source>
        <strain>ATCC BAA-935 / AF2122/97</strain>
    </source>
</reference>
<reference key="2">
    <citation type="journal article" date="2017" name="Genome Announc.">
        <title>Updated reference genome sequence and annotation of Mycobacterium bovis AF2122/97.</title>
        <authorList>
            <person name="Malone K.M."/>
            <person name="Farrell D."/>
            <person name="Stuber T.P."/>
            <person name="Schubert O.T."/>
            <person name="Aebersold R."/>
            <person name="Robbe-Austerman S."/>
            <person name="Gordon S.V."/>
        </authorList>
    </citation>
    <scope>NUCLEOTIDE SEQUENCE [LARGE SCALE GENOMIC DNA]</scope>
    <scope>GENOME REANNOTATION</scope>
    <source>
        <strain>ATCC BAA-935 / AF2122/97</strain>
    </source>
</reference>